<accession>Q04U33</accession>
<dbReference type="EMBL" id="CP000350">
    <property type="protein sequence ID" value="ABJ75587.1"/>
    <property type="molecule type" value="Genomic_DNA"/>
</dbReference>
<dbReference type="SMR" id="Q04U33"/>
<dbReference type="KEGG" id="lbj:LBJ_0944"/>
<dbReference type="HOGENOM" id="CLU_132594_0_0_12"/>
<dbReference type="Proteomes" id="UP000000656">
    <property type="component" value="Chromosome 1"/>
</dbReference>
<dbReference type="GO" id="GO:0005829">
    <property type="term" value="C:cytosol"/>
    <property type="evidence" value="ECO:0007669"/>
    <property type="project" value="TreeGrafter"/>
</dbReference>
<dbReference type="GO" id="GO:0000028">
    <property type="term" value="P:ribosomal small subunit assembly"/>
    <property type="evidence" value="ECO:0007669"/>
    <property type="project" value="TreeGrafter"/>
</dbReference>
<dbReference type="GO" id="GO:0006412">
    <property type="term" value="P:translation"/>
    <property type="evidence" value="ECO:0007669"/>
    <property type="project" value="TreeGrafter"/>
</dbReference>
<dbReference type="Gene3D" id="3.30.300.70">
    <property type="entry name" value="RimP-like superfamily, N-terminal"/>
    <property type="match status" value="1"/>
</dbReference>
<dbReference type="HAMAP" id="MF_01077">
    <property type="entry name" value="RimP"/>
    <property type="match status" value="1"/>
</dbReference>
<dbReference type="InterPro" id="IPR003728">
    <property type="entry name" value="Ribosome_maturation_RimP"/>
</dbReference>
<dbReference type="InterPro" id="IPR028989">
    <property type="entry name" value="RimP_N"/>
</dbReference>
<dbReference type="InterPro" id="IPR035956">
    <property type="entry name" value="RimP_N_sf"/>
</dbReference>
<dbReference type="NCBIfam" id="NF011228">
    <property type="entry name" value="PRK14635.1"/>
    <property type="match status" value="1"/>
</dbReference>
<dbReference type="PANTHER" id="PTHR33867">
    <property type="entry name" value="RIBOSOME MATURATION FACTOR RIMP"/>
    <property type="match status" value="1"/>
</dbReference>
<dbReference type="PANTHER" id="PTHR33867:SF1">
    <property type="entry name" value="RIBOSOME MATURATION FACTOR RIMP"/>
    <property type="match status" value="1"/>
</dbReference>
<dbReference type="Pfam" id="PF02576">
    <property type="entry name" value="RimP_N"/>
    <property type="match status" value="1"/>
</dbReference>
<dbReference type="SUPFAM" id="SSF75420">
    <property type="entry name" value="YhbC-like, N-terminal domain"/>
    <property type="match status" value="1"/>
</dbReference>
<reference key="1">
    <citation type="journal article" date="2006" name="Proc. Natl. Acad. Sci. U.S.A.">
        <title>Genome reduction in Leptospira borgpetersenii reflects limited transmission potential.</title>
        <authorList>
            <person name="Bulach D.M."/>
            <person name="Zuerner R.L."/>
            <person name="Wilson P."/>
            <person name="Seemann T."/>
            <person name="McGrath A."/>
            <person name="Cullen P.A."/>
            <person name="Davis J."/>
            <person name="Johnson M."/>
            <person name="Kuczek E."/>
            <person name="Alt D.P."/>
            <person name="Peterson-Burch B."/>
            <person name="Coppel R.L."/>
            <person name="Rood J.I."/>
            <person name="Davies J.K."/>
            <person name="Adler B."/>
        </authorList>
    </citation>
    <scope>NUCLEOTIDE SEQUENCE [LARGE SCALE GENOMIC DNA]</scope>
    <source>
        <strain>JB197</strain>
    </source>
</reference>
<comment type="function">
    <text evidence="1">Required for maturation of 30S ribosomal subunits.</text>
</comment>
<comment type="subcellular location">
    <subcellularLocation>
        <location evidence="1">Cytoplasm</location>
    </subcellularLocation>
</comment>
<comment type="similarity">
    <text evidence="1">Belongs to the RimP family.</text>
</comment>
<name>RIMP_LEPBJ</name>
<evidence type="ECO:0000255" key="1">
    <source>
        <dbReference type="HAMAP-Rule" id="MF_01077"/>
    </source>
</evidence>
<keyword id="KW-0963">Cytoplasm</keyword>
<keyword id="KW-0690">Ribosome biogenesis</keyword>
<gene>
    <name evidence="1" type="primary">rimP</name>
    <name type="ordered locus">LBJ_0944</name>
</gene>
<proteinExistence type="inferred from homology"/>
<organism>
    <name type="scientific">Leptospira borgpetersenii serovar Hardjo-bovis (strain JB197)</name>
    <dbReference type="NCBI Taxonomy" id="355277"/>
    <lineage>
        <taxon>Bacteria</taxon>
        <taxon>Pseudomonadati</taxon>
        <taxon>Spirochaetota</taxon>
        <taxon>Spirochaetia</taxon>
        <taxon>Leptospirales</taxon>
        <taxon>Leptospiraceae</taxon>
        <taxon>Leptospira</taxon>
    </lineage>
</organism>
<sequence>MTVSREEISTILDDALFLPVKLYSLKVNQRPNHSLIEVVLDNLEHPYGSVSLLECEQVSRKLKEELERISPDLDFTLKVSSAGAERKLHLPEDIDRFRGIPVRLVFRSGESEKNQEGIFRIVNRDGDQVFLEKFQKGKKSAVKKQTTLNLKDILKGNLYVSI</sequence>
<feature type="chain" id="PRO_1000064729" description="Ribosome maturation factor RimP">
    <location>
        <begin position="1"/>
        <end position="162"/>
    </location>
</feature>
<protein>
    <recommendedName>
        <fullName evidence="1">Ribosome maturation factor RimP</fullName>
    </recommendedName>
</protein>